<gene>
    <name evidence="1" type="primary">metE</name>
    <name type="ordered locus">USA300HOU_0377</name>
</gene>
<organism>
    <name type="scientific">Staphylococcus aureus (strain USA300 / TCH1516)</name>
    <dbReference type="NCBI Taxonomy" id="451516"/>
    <lineage>
        <taxon>Bacteria</taxon>
        <taxon>Bacillati</taxon>
        <taxon>Bacillota</taxon>
        <taxon>Bacilli</taxon>
        <taxon>Bacillales</taxon>
        <taxon>Staphylococcaceae</taxon>
        <taxon>Staphylococcus</taxon>
    </lineage>
</organism>
<comment type="function">
    <text evidence="1">Catalyzes the transfer of a methyl group from 5-methyltetrahydrofolate to homocysteine resulting in methionine formation.</text>
</comment>
<comment type="catalytic activity">
    <reaction evidence="1">
        <text>5-methyltetrahydropteroyltri-L-glutamate + L-homocysteine = tetrahydropteroyltri-L-glutamate + L-methionine</text>
        <dbReference type="Rhea" id="RHEA:21196"/>
        <dbReference type="ChEBI" id="CHEBI:57844"/>
        <dbReference type="ChEBI" id="CHEBI:58140"/>
        <dbReference type="ChEBI" id="CHEBI:58199"/>
        <dbReference type="ChEBI" id="CHEBI:58207"/>
        <dbReference type="EC" id="2.1.1.14"/>
    </reaction>
</comment>
<comment type="cofactor">
    <cofactor evidence="1">
        <name>Zn(2+)</name>
        <dbReference type="ChEBI" id="CHEBI:29105"/>
    </cofactor>
    <text evidence="1">Binds 1 zinc ion per subunit.</text>
</comment>
<comment type="pathway">
    <text evidence="1">Amino-acid biosynthesis; L-methionine biosynthesis via de novo pathway; L-methionine from L-homocysteine (MetE route): step 1/1.</text>
</comment>
<comment type="similarity">
    <text evidence="1">Belongs to the vitamin-B12 independent methionine synthase family.</text>
</comment>
<reference key="1">
    <citation type="journal article" date="2007" name="BMC Microbiol.">
        <title>Subtle genetic changes enhance virulence of methicillin resistant and sensitive Staphylococcus aureus.</title>
        <authorList>
            <person name="Highlander S.K."/>
            <person name="Hulten K.G."/>
            <person name="Qin X."/>
            <person name="Jiang H."/>
            <person name="Yerrapragada S."/>
            <person name="Mason E.O. Jr."/>
            <person name="Shang Y."/>
            <person name="Williams T.M."/>
            <person name="Fortunov R.M."/>
            <person name="Liu Y."/>
            <person name="Igboeli O."/>
            <person name="Petrosino J."/>
            <person name="Tirumalai M."/>
            <person name="Uzman A."/>
            <person name="Fox G.E."/>
            <person name="Cardenas A.M."/>
            <person name="Muzny D.M."/>
            <person name="Hemphill L."/>
            <person name="Ding Y."/>
            <person name="Dugan S."/>
            <person name="Blyth P.R."/>
            <person name="Buhay C.J."/>
            <person name="Dinh H.H."/>
            <person name="Hawes A.C."/>
            <person name="Holder M."/>
            <person name="Kovar C.L."/>
            <person name="Lee S.L."/>
            <person name="Liu W."/>
            <person name="Nazareth L.V."/>
            <person name="Wang Q."/>
            <person name="Zhou J."/>
            <person name="Kaplan S.L."/>
            <person name="Weinstock G.M."/>
        </authorList>
    </citation>
    <scope>NUCLEOTIDE SEQUENCE [LARGE SCALE GENOMIC DNA]</scope>
    <source>
        <strain>USA300 / TCH1516</strain>
    </source>
</reference>
<dbReference type="EC" id="2.1.1.14" evidence="1"/>
<dbReference type="EMBL" id="CP000730">
    <property type="protein sequence ID" value="ABX28407.1"/>
    <property type="molecule type" value="Genomic_DNA"/>
</dbReference>
<dbReference type="RefSeq" id="WP_000207614.1">
    <property type="nucleotide sequence ID" value="NC_010079.1"/>
</dbReference>
<dbReference type="SMR" id="A8YZI1"/>
<dbReference type="KEGG" id="sax:USA300HOU_0377"/>
<dbReference type="HOGENOM" id="CLU_013175_0_0_9"/>
<dbReference type="UniPathway" id="UPA00051">
    <property type="reaction ID" value="UER00082"/>
</dbReference>
<dbReference type="GO" id="GO:0003871">
    <property type="term" value="F:5-methyltetrahydropteroyltriglutamate-homocysteine S-methyltransferase activity"/>
    <property type="evidence" value="ECO:0007669"/>
    <property type="project" value="UniProtKB-UniRule"/>
</dbReference>
<dbReference type="GO" id="GO:0008270">
    <property type="term" value="F:zinc ion binding"/>
    <property type="evidence" value="ECO:0007669"/>
    <property type="project" value="InterPro"/>
</dbReference>
<dbReference type="GO" id="GO:0009086">
    <property type="term" value="P:methionine biosynthetic process"/>
    <property type="evidence" value="ECO:0007669"/>
    <property type="project" value="UniProtKB-UniRule"/>
</dbReference>
<dbReference type="GO" id="GO:0032259">
    <property type="term" value="P:methylation"/>
    <property type="evidence" value="ECO:0007669"/>
    <property type="project" value="UniProtKB-KW"/>
</dbReference>
<dbReference type="CDD" id="cd03311">
    <property type="entry name" value="CIMS_C_terminal_like"/>
    <property type="match status" value="1"/>
</dbReference>
<dbReference type="CDD" id="cd03312">
    <property type="entry name" value="CIMS_N_terminal_like"/>
    <property type="match status" value="1"/>
</dbReference>
<dbReference type="Gene3D" id="3.20.20.210">
    <property type="match status" value="2"/>
</dbReference>
<dbReference type="HAMAP" id="MF_00172">
    <property type="entry name" value="Meth_synth"/>
    <property type="match status" value="1"/>
</dbReference>
<dbReference type="InterPro" id="IPR013215">
    <property type="entry name" value="Cbl-indep_Met_Synth_N"/>
</dbReference>
<dbReference type="InterPro" id="IPR006276">
    <property type="entry name" value="Cobalamin-indep_Met_synthase"/>
</dbReference>
<dbReference type="InterPro" id="IPR002629">
    <property type="entry name" value="Met_Synth_C/arc"/>
</dbReference>
<dbReference type="InterPro" id="IPR038071">
    <property type="entry name" value="UROD/MetE-like_sf"/>
</dbReference>
<dbReference type="NCBIfam" id="TIGR01371">
    <property type="entry name" value="met_syn_B12ind"/>
    <property type="match status" value="1"/>
</dbReference>
<dbReference type="NCBIfam" id="NF003556">
    <property type="entry name" value="PRK05222.1"/>
    <property type="match status" value="1"/>
</dbReference>
<dbReference type="PANTHER" id="PTHR30519">
    <property type="entry name" value="5-METHYLTETRAHYDROPTEROYLTRIGLUTAMATE--HOMOCYSTEINE METHYLTRANSFERASE"/>
    <property type="match status" value="1"/>
</dbReference>
<dbReference type="Pfam" id="PF08267">
    <property type="entry name" value="Meth_synt_1"/>
    <property type="match status" value="1"/>
</dbReference>
<dbReference type="Pfam" id="PF01717">
    <property type="entry name" value="Meth_synt_2"/>
    <property type="match status" value="1"/>
</dbReference>
<dbReference type="PIRSF" id="PIRSF000382">
    <property type="entry name" value="MeTrfase_B12_ind"/>
    <property type="match status" value="1"/>
</dbReference>
<dbReference type="SUPFAM" id="SSF51726">
    <property type="entry name" value="UROD/MetE-like"/>
    <property type="match status" value="2"/>
</dbReference>
<feature type="chain" id="PRO_1000077120" description="5-methyltetrahydropteroyltriglutamate--homocysteine methyltransferase">
    <location>
        <begin position="1"/>
        <end position="742"/>
    </location>
</feature>
<feature type="active site" description="Proton donor" evidence="1">
    <location>
        <position position="683"/>
    </location>
</feature>
<feature type="binding site" evidence="1">
    <location>
        <begin position="18"/>
        <end position="21"/>
    </location>
    <ligand>
        <name>5-methyltetrahydropteroyltri-L-glutamate</name>
        <dbReference type="ChEBI" id="CHEBI:58207"/>
    </ligand>
</feature>
<feature type="binding site" evidence="1">
    <location>
        <position position="112"/>
    </location>
    <ligand>
        <name>5-methyltetrahydropteroyltri-L-glutamate</name>
        <dbReference type="ChEBI" id="CHEBI:58207"/>
    </ligand>
</feature>
<feature type="binding site" evidence="1">
    <location>
        <begin position="420"/>
        <end position="422"/>
    </location>
    <ligand>
        <name>L-homocysteine</name>
        <dbReference type="ChEBI" id="CHEBI:58199"/>
    </ligand>
</feature>
<feature type="binding site" evidence="1">
    <location>
        <begin position="420"/>
        <end position="422"/>
    </location>
    <ligand>
        <name>L-methionine</name>
        <dbReference type="ChEBI" id="CHEBI:57844"/>
    </ligand>
</feature>
<feature type="binding site" evidence="1">
    <location>
        <position position="473"/>
    </location>
    <ligand>
        <name>L-homocysteine</name>
        <dbReference type="ChEBI" id="CHEBI:58199"/>
    </ligand>
</feature>
<feature type="binding site" evidence="1">
    <location>
        <position position="473"/>
    </location>
    <ligand>
        <name>L-methionine</name>
        <dbReference type="ChEBI" id="CHEBI:57844"/>
    </ligand>
</feature>
<feature type="binding site" evidence="1">
    <location>
        <position position="550"/>
    </location>
    <ligand>
        <name>5-methyltetrahydropteroyltri-L-glutamate</name>
        <dbReference type="ChEBI" id="CHEBI:58207"/>
    </ligand>
</feature>
<feature type="binding site" evidence="1">
    <location>
        <position position="588"/>
    </location>
    <ligand>
        <name>L-homocysteine</name>
        <dbReference type="ChEBI" id="CHEBI:58199"/>
    </ligand>
</feature>
<feature type="binding site" evidence="1">
    <location>
        <position position="588"/>
    </location>
    <ligand>
        <name>L-methionine</name>
        <dbReference type="ChEBI" id="CHEBI:57844"/>
    </ligand>
</feature>
<feature type="binding site" evidence="1">
    <location>
        <position position="594"/>
    </location>
    <ligand>
        <name>5-methyltetrahydropteroyltri-L-glutamate</name>
        <dbReference type="ChEBI" id="CHEBI:58207"/>
    </ligand>
</feature>
<feature type="binding site" evidence="1">
    <location>
        <position position="630"/>
    </location>
    <ligand>
        <name>Zn(2+)</name>
        <dbReference type="ChEBI" id="CHEBI:29105"/>
        <note>catalytic</note>
    </ligand>
</feature>
<feature type="binding site" evidence="1">
    <location>
        <position position="632"/>
    </location>
    <ligand>
        <name>Zn(2+)</name>
        <dbReference type="ChEBI" id="CHEBI:29105"/>
        <note>catalytic</note>
    </ligand>
</feature>
<feature type="binding site" evidence="1">
    <location>
        <position position="654"/>
    </location>
    <ligand>
        <name>Zn(2+)</name>
        <dbReference type="ChEBI" id="CHEBI:29105"/>
        <note>catalytic</note>
    </ligand>
</feature>
<feature type="binding site" evidence="1">
    <location>
        <position position="715"/>
    </location>
    <ligand>
        <name>Zn(2+)</name>
        <dbReference type="ChEBI" id="CHEBI:29105"/>
        <note>catalytic</note>
    </ligand>
</feature>
<keyword id="KW-0028">Amino-acid biosynthesis</keyword>
<keyword id="KW-0479">Metal-binding</keyword>
<keyword id="KW-0486">Methionine biosynthesis</keyword>
<keyword id="KW-0489">Methyltransferase</keyword>
<keyword id="KW-0677">Repeat</keyword>
<keyword id="KW-0808">Transferase</keyword>
<keyword id="KW-0862">Zinc</keyword>
<accession>A8YZI1</accession>
<name>METE_STAAT</name>
<proteinExistence type="inferred from homology"/>
<protein>
    <recommendedName>
        <fullName evidence="1">5-methyltetrahydropteroyltriglutamate--homocysteine methyltransferase</fullName>
        <ecNumber evidence="1">2.1.1.14</ecNumber>
    </recommendedName>
    <alternativeName>
        <fullName evidence="1">Cobalamin-independent methionine synthase</fullName>
    </alternativeName>
    <alternativeName>
        <fullName evidence="1">Methionine synthase, vitamin-B12 independent isozyme</fullName>
    </alternativeName>
</protein>
<evidence type="ECO:0000255" key="1">
    <source>
        <dbReference type="HAMAP-Rule" id="MF_00172"/>
    </source>
</evidence>
<sequence length="742" mass="85076">MTTIKTSNLGFPRLGRKREWKKAIESYWAKKISKEELDQTLTDLHKENLLLQKYYHLDSIPVGDFSLYDHILDTSLLFNIIPERFQGRTIDDDLLFDIARGNKDHVASALIKWFNTNYHYIVPEWDNVEPKVSRNVLLDRFKYAQSLNVNAHPVIVGPITFVKLSKGGHQTFEEKVKTLLPLYKEVFESLIDAGAEYIQVDEPILVTDDSESYENITREAYDYFEKAGVAKKLVIQTYFERAHLKFLSSLPVGGIGLDFVHDNGYNLKQIEAGDFDKSKTLYAGIIDGRNVWASDIEAKKVLIDKLLAHTNELVIQPSSSLLHVPVSLDDETLDTSVGEGLSFATEKLDELDALRRLFNQNDSVKYDKLKARYERFQNQSFKNLDYDFESVRTSRQSPFAQRIEQQQKRLNLPDLPTTTIGSFPQSREVRKYRADWKNKRITDEAYETFLKNEIARWIKIQEDIGLDVLVHGEFERNDMVEFFGEKLQGFLVTKFGWVQSYGSRAVKPPIIYGDVKWTAPLTVDETVYAQSLTDKPVKGMLTGPVTILNWSFERVDLPRKVVQDQIALAINEEVLALEAAGIKVIQVDEPALREGLPLRSEYHEQYLKDAVLSFKLATSSVRDETQIHTHMCYSQFGQIIHAIHDLDADVISIETSRSHGDLIKDFEDINYDLGIGLGVYDIHSPRIPTKEEITTAINRSLQQIDRSLFWVNPDCGLKTRKEEEVKDALTVLVNAVKAKRQE</sequence>